<sequence length="233" mass="24587">MSEAKNLLAQGLWKNNSALVQLLGLCPLLAVSSTATNALGLGLATTLVLVCTNTAVSALRRWVPSEIRIPIYVMIIASVVSTVQMLINAYAFGLYQSLGIFIPLIVTNCIVIGRAEAYAAKNPVGLSALDGFAMGMGATCALFVLGALREILGNGTLFDGADMLLGSWATVLRIDILHLDTPFLLAMLPPGAFIGLGLLLAGKYVIDEKMKARKANTRVSVPQLQDGDAEKAL</sequence>
<dbReference type="EC" id="7.-.-.-" evidence="1"/>
<dbReference type="EMBL" id="AL590842">
    <property type="protein sequence ID" value="CAL20869.1"/>
    <property type="molecule type" value="Genomic_DNA"/>
</dbReference>
<dbReference type="EMBL" id="AE009952">
    <property type="protein sequence ID" value="AAM85645.1"/>
    <property type="molecule type" value="Genomic_DNA"/>
</dbReference>
<dbReference type="EMBL" id="AE017042">
    <property type="protein sequence ID" value="AAS62254.1"/>
    <property type="molecule type" value="Genomic_DNA"/>
</dbReference>
<dbReference type="PIR" id="AB0273">
    <property type="entry name" value="AB0273"/>
</dbReference>
<dbReference type="RefSeq" id="WP_002210601.1">
    <property type="nucleotide sequence ID" value="NZ_WUCM01000001.1"/>
</dbReference>
<dbReference type="RefSeq" id="YP_002347211.1">
    <property type="nucleotide sequence ID" value="NC_003143.1"/>
</dbReference>
<dbReference type="SMR" id="Q8ZED4"/>
<dbReference type="STRING" id="214092.YPO2240"/>
<dbReference type="PaxDb" id="214092-YPO2240"/>
<dbReference type="DNASU" id="1147028"/>
<dbReference type="EnsemblBacteria" id="AAS62254">
    <property type="protein sequence ID" value="AAS62254"/>
    <property type="gene ID" value="YP_2038"/>
</dbReference>
<dbReference type="KEGG" id="ype:YPO2240"/>
<dbReference type="KEGG" id="ypk:y2081"/>
<dbReference type="KEGG" id="ypm:YP_2038"/>
<dbReference type="PATRIC" id="fig|214092.21.peg.2635"/>
<dbReference type="eggNOG" id="COG4660">
    <property type="taxonomic scope" value="Bacteria"/>
</dbReference>
<dbReference type="HOGENOM" id="CLU_046659_1_0_6"/>
<dbReference type="OMA" id="RIEVFHT"/>
<dbReference type="OrthoDB" id="9782945at2"/>
<dbReference type="Proteomes" id="UP000000815">
    <property type="component" value="Chromosome"/>
</dbReference>
<dbReference type="Proteomes" id="UP000001019">
    <property type="component" value="Chromosome"/>
</dbReference>
<dbReference type="Proteomes" id="UP000002490">
    <property type="component" value="Chromosome"/>
</dbReference>
<dbReference type="GO" id="GO:0005886">
    <property type="term" value="C:plasma membrane"/>
    <property type="evidence" value="ECO:0000318"/>
    <property type="project" value="GO_Central"/>
</dbReference>
<dbReference type="GO" id="GO:0022900">
    <property type="term" value="P:electron transport chain"/>
    <property type="evidence" value="ECO:0007669"/>
    <property type="project" value="UniProtKB-UniRule"/>
</dbReference>
<dbReference type="HAMAP" id="MF_00478">
    <property type="entry name" value="RsxE_RnfE"/>
    <property type="match status" value="1"/>
</dbReference>
<dbReference type="InterPro" id="IPR003667">
    <property type="entry name" value="NqrDE/RnfAE"/>
</dbReference>
<dbReference type="InterPro" id="IPR010968">
    <property type="entry name" value="RnfE"/>
</dbReference>
<dbReference type="NCBIfam" id="NF009070">
    <property type="entry name" value="PRK12405.1"/>
    <property type="match status" value="1"/>
</dbReference>
<dbReference type="NCBIfam" id="TIGR01948">
    <property type="entry name" value="rnfE"/>
    <property type="match status" value="1"/>
</dbReference>
<dbReference type="PANTHER" id="PTHR30586">
    <property type="entry name" value="ELECTRON TRANSPORT COMPLEX PROTEIN RNFE"/>
    <property type="match status" value="1"/>
</dbReference>
<dbReference type="PANTHER" id="PTHR30586:SF0">
    <property type="entry name" value="ION-TRANSLOCATING OXIDOREDUCTASE COMPLEX SUBUNIT E"/>
    <property type="match status" value="1"/>
</dbReference>
<dbReference type="Pfam" id="PF02508">
    <property type="entry name" value="Rnf-Nqr"/>
    <property type="match status" value="1"/>
</dbReference>
<dbReference type="PIRSF" id="PIRSF006102">
    <property type="entry name" value="NQR_DE"/>
    <property type="match status" value="1"/>
</dbReference>
<proteinExistence type="inferred from homology"/>
<keyword id="KW-0997">Cell inner membrane</keyword>
<keyword id="KW-1003">Cell membrane</keyword>
<keyword id="KW-0249">Electron transport</keyword>
<keyword id="KW-0472">Membrane</keyword>
<keyword id="KW-1185">Reference proteome</keyword>
<keyword id="KW-1278">Translocase</keyword>
<keyword id="KW-0812">Transmembrane</keyword>
<keyword id="KW-1133">Transmembrane helix</keyword>
<keyword id="KW-0813">Transport</keyword>
<feature type="chain" id="PRO_0000214285" description="Ion-translocating oxidoreductase complex subunit E">
    <location>
        <begin position="1"/>
        <end position="233"/>
    </location>
</feature>
<feature type="transmembrane region" description="Helical" evidence="1">
    <location>
        <begin position="18"/>
        <end position="38"/>
    </location>
</feature>
<feature type="transmembrane region" description="Helical" evidence="1">
    <location>
        <begin position="39"/>
        <end position="59"/>
    </location>
</feature>
<feature type="transmembrane region" description="Helical" evidence="1">
    <location>
        <begin position="69"/>
        <end position="89"/>
    </location>
</feature>
<feature type="transmembrane region" description="Helical" evidence="1">
    <location>
        <begin position="92"/>
        <end position="112"/>
    </location>
</feature>
<feature type="transmembrane region" description="Helical" evidence="1">
    <location>
        <begin position="128"/>
        <end position="148"/>
    </location>
</feature>
<feature type="transmembrane region" description="Helical" evidence="1">
    <location>
        <begin position="182"/>
        <end position="202"/>
    </location>
</feature>
<name>RNFE_YERPE</name>
<accession>Q8ZED4</accession>
<accession>Q0WES7</accession>
<gene>
    <name evidence="1" type="primary">rnfE</name>
    <name type="ordered locus">YPO2240</name>
    <name type="ordered locus">y2081</name>
    <name type="ordered locus">YP_2038</name>
</gene>
<reference key="1">
    <citation type="journal article" date="2001" name="Nature">
        <title>Genome sequence of Yersinia pestis, the causative agent of plague.</title>
        <authorList>
            <person name="Parkhill J."/>
            <person name="Wren B.W."/>
            <person name="Thomson N.R."/>
            <person name="Titball R.W."/>
            <person name="Holden M.T.G."/>
            <person name="Prentice M.B."/>
            <person name="Sebaihia M."/>
            <person name="James K.D."/>
            <person name="Churcher C.M."/>
            <person name="Mungall K.L."/>
            <person name="Baker S."/>
            <person name="Basham D."/>
            <person name="Bentley S.D."/>
            <person name="Brooks K."/>
            <person name="Cerdeno-Tarraga A.-M."/>
            <person name="Chillingworth T."/>
            <person name="Cronin A."/>
            <person name="Davies R.M."/>
            <person name="Davis P."/>
            <person name="Dougan G."/>
            <person name="Feltwell T."/>
            <person name="Hamlin N."/>
            <person name="Holroyd S."/>
            <person name="Jagels K."/>
            <person name="Karlyshev A.V."/>
            <person name="Leather S."/>
            <person name="Moule S."/>
            <person name="Oyston P.C.F."/>
            <person name="Quail M.A."/>
            <person name="Rutherford K.M."/>
            <person name="Simmonds M."/>
            <person name="Skelton J."/>
            <person name="Stevens K."/>
            <person name="Whitehead S."/>
            <person name="Barrell B.G."/>
        </authorList>
    </citation>
    <scope>NUCLEOTIDE SEQUENCE [LARGE SCALE GENOMIC DNA]</scope>
    <source>
        <strain>CO-92 / Biovar Orientalis</strain>
    </source>
</reference>
<reference key="2">
    <citation type="journal article" date="2002" name="J. Bacteriol.">
        <title>Genome sequence of Yersinia pestis KIM.</title>
        <authorList>
            <person name="Deng W."/>
            <person name="Burland V."/>
            <person name="Plunkett G. III"/>
            <person name="Boutin A."/>
            <person name="Mayhew G.F."/>
            <person name="Liss P."/>
            <person name="Perna N.T."/>
            <person name="Rose D.J."/>
            <person name="Mau B."/>
            <person name="Zhou S."/>
            <person name="Schwartz D.C."/>
            <person name="Fetherston J.D."/>
            <person name="Lindler L.E."/>
            <person name="Brubaker R.R."/>
            <person name="Plano G.V."/>
            <person name="Straley S.C."/>
            <person name="McDonough K.A."/>
            <person name="Nilles M.L."/>
            <person name="Matson J.S."/>
            <person name="Blattner F.R."/>
            <person name="Perry R.D."/>
        </authorList>
    </citation>
    <scope>NUCLEOTIDE SEQUENCE [LARGE SCALE GENOMIC DNA]</scope>
    <source>
        <strain>KIM10+ / Biovar Mediaevalis</strain>
    </source>
</reference>
<reference key="3">
    <citation type="journal article" date="2004" name="DNA Res.">
        <title>Complete genome sequence of Yersinia pestis strain 91001, an isolate avirulent to humans.</title>
        <authorList>
            <person name="Song Y."/>
            <person name="Tong Z."/>
            <person name="Wang J."/>
            <person name="Wang L."/>
            <person name="Guo Z."/>
            <person name="Han Y."/>
            <person name="Zhang J."/>
            <person name="Pei D."/>
            <person name="Zhou D."/>
            <person name="Qin H."/>
            <person name="Pang X."/>
            <person name="Han Y."/>
            <person name="Zhai J."/>
            <person name="Li M."/>
            <person name="Cui B."/>
            <person name="Qi Z."/>
            <person name="Jin L."/>
            <person name="Dai R."/>
            <person name="Chen F."/>
            <person name="Li S."/>
            <person name="Ye C."/>
            <person name="Du Z."/>
            <person name="Lin W."/>
            <person name="Wang J."/>
            <person name="Yu J."/>
            <person name="Yang H."/>
            <person name="Wang J."/>
            <person name="Huang P."/>
            <person name="Yang R."/>
        </authorList>
    </citation>
    <scope>NUCLEOTIDE SEQUENCE [LARGE SCALE GENOMIC DNA]</scope>
    <source>
        <strain>91001 / Biovar Mediaevalis</strain>
    </source>
</reference>
<protein>
    <recommendedName>
        <fullName evidence="1">Ion-translocating oxidoreductase complex subunit E</fullName>
        <ecNumber evidence="1">7.-.-.-</ecNumber>
    </recommendedName>
    <alternativeName>
        <fullName evidence="1">Rnf electron transport complex subunit E</fullName>
    </alternativeName>
</protein>
<organism>
    <name type="scientific">Yersinia pestis</name>
    <dbReference type="NCBI Taxonomy" id="632"/>
    <lineage>
        <taxon>Bacteria</taxon>
        <taxon>Pseudomonadati</taxon>
        <taxon>Pseudomonadota</taxon>
        <taxon>Gammaproteobacteria</taxon>
        <taxon>Enterobacterales</taxon>
        <taxon>Yersiniaceae</taxon>
        <taxon>Yersinia</taxon>
    </lineage>
</organism>
<comment type="function">
    <text evidence="1">Part of a membrane-bound complex that couples electron transfer with translocation of ions across the membrane.</text>
</comment>
<comment type="subunit">
    <text evidence="1">The complex is composed of six subunits: RnfA, RnfB, RnfC, RnfD, RnfE and RnfG.</text>
</comment>
<comment type="subcellular location">
    <subcellularLocation>
        <location evidence="1">Cell inner membrane</location>
        <topology evidence="1">Multi-pass membrane protein</topology>
    </subcellularLocation>
</comment>
<comment type="similarity">
    <text evidence="1">Belongs to the NqrDE/RnfAE family.</text>
</comment>
<evidence type="ECO:0000255" key="1">
    <source>
        <dbReference type="HAMAP-Rule" id="MF_00478"/>
    </source>
</evidence>